<gene>
    <name evidence="5" type="ORF">DDB_G0288149</name>
</gene>
<proteinExistence type="inferred from homology"/>
<protein>
    <recommendedName>
        <fullName evidence="4">BLOC-1-related complex subunit 8 homolog</fullName>
    </recommendedName>
</protein>
<reference key="1">
    <citation type="journal article" date="2005" name="Nature">
        <title>The genome of the social amoeba Dictyostelium discoideum.</title>
        <authorList>
            <person name="Eichinger L."/>
            <person name="Pachebat J.A."/>
            <person name="Gloeckner G."/>
            <person name="Rajandream M.A."/>
            <person name="Sucgang R."/>
            <person name="Berriman M."/>
            <person name="Song J."/>
            <person name="Olsen R."/>
            <person name="Szafranski K."/>
            <person name="Xu Q."/>
            <person name="Tunggal B."/>
            <person name="Kummerfeld S."/>
            <person name="Madera M."/>
            <person name="Konfortov B.A."/>
            <person name="Rivero F."/>
            <person name="Bankier A.T."/>
            <person name="Lehmann R."/>
            <person name="Hamlin N."/>
            <person name="Davies R."/>
            <person name="Gaudet P."/>
            <person name="Fey P."/>
            <person name="Pilcher K."/>
            <person name="Chen G."/>
            <person name="Saunders D."/>
            <person name="Sodergren E.J."/>
            <person name="Davis P."/>
            <person name="Kerhornou A."/>
            <person name="Nie X."/>
            <person name="Hall N."/>
            <person name="Anjard C."/>
            <person name="Hemphill L."/>
            <person name="Bason N."/>
            <person name="Farbrother P."/>
            <person name="Desany B."/>
            <person name="Just E."/>
            <person name="Morio T."/>
            <person name="Rost R."/>
            <person name="Churcher C.M."/>
            <person name="Cooper J."/>
            <person name="Haydock S."/>
            <person name="van Driessche N."/>
            <person name="Cronin A."/>
            <person name="Goodhead I."/>
            <person name="Muzny D.M."/>
            <person name="Mourier T."/>
            <person name="Pain A."/>
            <person name="Lu M."/>
            <person name="Harper D."/>
            <person name="Lindsay R."/>
            <person name="Hauser H."/>
            <person name="James K.D."/>
            <person name="Quiles M."/>
            <person name="Madan Babu M."/>
            <person name="Saito T."/>
            <person name="Buchrieser C."/>
            <person name="Wardroper A."/>
            <person name="Felder M."/>
            <person name="Thangavelu M."/>
            <person name="Johnson D."/>
            <person name="Knights A."/>
            <person name="Loulseged H."/>
            <person name="Mungall K.L."/>
            <person name="Oliver K."/>
            <person name="Price C."/>
            <person name="Quail M.A."/>
            <person name="Urushihara H."/>
            <person name="Hernandez J."/>
            <person name="Rabbinowitsch E."/>
            <person name="Steffen D."/>
            <person name="Sanders M."/>
            <person name="Ma J."/>
            <person name="Kohara Y."/>
            <person name="Sharp S."/>
            <person name="Simmonds M.N."/>
            <person name="Spiegler S."/>
            <person name="Tivey A."/>
            <person name="Sugano S."/>
            <person name="White B."/>
            <person name="Walker D."/>
            <person name="Woodward J.R."/>
            <person name="Winckler T."/>
            <person name="Tanaka Y."/>
            <person name="Shaulsky G."/>
            <person name="Schleicher M."/>
            <person name="Weinstock G.M."/>
            <person name="Rosenthal A."/>
            <person name="Cox E.C."/>
            <person name="Chisholm R.L."/>
            <person name="Gibbs R.A."/>
            <person name="Loomis W.F."/>
            <person name="Platzer M."/>
            <person name="Kay R.R."/>
            <person name="Williams J.G."/>
            <person name="Dear P.H."/>
            <person name="Noegel A.A."/>
            <person name="Barrell B.G."/>
            <person name="Kuspa A."/>
        </authorList>
    </citation>
    <scope>NUCLEOTIDE SEQUENCE [LARGE SCALE GENOMIC DNA]</scope>
    <source>
        <strain>AX4</strain>
    </source>
</reference>
<dbReference type="EMBL" id="AAFI02000109">
    <property type="protein sequence ID" value="EAL63362.1"/>
    <property type="molecule type" value="Genomic_DNA"/>
</dbReference>
<dbReference type="RefSeq" id="XP_636867.1">
    <property type="nucleotide sequence ID" value="XM_631775.1"/>
</dbReference>
<dbReference type="SMR" id="Q54JC6"/>
<dbReference type="STRING" id="44689.Q54JC6"/>
<dbReference type="PaxDb" id="44689-DDB0304876"/>
<dbReference type="EnsemblProtists" id="EAL63362">
    <property type="protein sequence ID" value="EAL63362"/>
    <property type="gene ID" value="DDB_G0288149"/>
</dbReference>
<dbReference type="GeneID" id="8626479"/>
<dbReference type="KEGG" id="ddi:DDB_G0288149"/>
<dbReference type="dictyBase" id="DDB_G0288149"/>
<dbReference type="VEuPathDB" id="AmoebaDB:DDB_G0288149"/>
<dbReference type="eggNOG" id="ENOG502SFK3">
    <property type="taxonomic scope" value="Eukaryota"/>
</dbReference>
<dbReference type="HOGENOM" id="CLU_1158177_0_0_1"/>
<dbReference type="InParanoid" id="Q54JC6"/>
<dbReference type="OMA" id="HIRRNIP"/>
<dbReference type="PRO" id="PR:Q54JC6"/>
<dbReference type="Proteomes" id="UP000002195">
    <property type="component" value="Chromosome 5"/>
</dbReference>
<dbReference type="GO" id="GO:0099078">
    <property type="term" value="C:BORC complex"/>
    <property type="evidence" value="ECO:0000318"/>
    <property type="project" value="GO_Central"/>
</dbReference>
<dbReference type="GO" id="GO:0005765">
    <property type="term" value="C:lysosomal membrane"/>
    <property type="evidence" value="ECO:0007669"/>
    <property type="project" value="UniProtKB-SubCell"/>
</dbReference>
<dbReference type="InterPro" id="IPR019320">
    <property type="entry name" value="BORCS8"/>
</dbReference>
<dbReference type="PANTHER" id="PTHR21146:SF0">
    <property type="entry name" value="BLOC-1-RELATED COMPLEX SUBUNIT 8"/>
    <property type="match status" value="1"/>
</dbReference>
<dbReference type="PANTHER" id="PTHR21146">
    <property type="entry name" value="MEF2B PROTEIN"/>
    <property type="match status" value="1"/>
</dbReference>
<dbReference type="Pfam" id="PF10167">
    <property type="entry name" value="BORCS8"/>
    <property type="match status" value="1"/>
</dbReference>
<evidence type="ECO:0000250" key="1">
    <source>
        <dbReference type="UniProtKB" id="Q96FH0"/>
    </source>
</evidence>
<evidence type="ECO:0000255" key="2"/>
<evidence type="ECO:0000256" key="3">
    <source>
        <dbReference type="SAM" id="MobiDB-lite"/>
    </source>
</evidence>
<evidence type="ECO:0000305" key="4"/>
<evidence type="ECO:0000312" key="5">
    <source>
        <dbReference type="dictyBase" id="DDB_G0288149"/>
    </source>
</evidence>
<feature type="chain" id="PRO_0000343675" description="BLOC-1-related complex subunit 8 homolog">
    <location>
        <begin position="1"/>
        <end position="240"/>
    </location>
</feature>
<feature type="region of interest" description="Disordered" evidence="3">
    <location>
        <begin position="1"/>
        <end position="33"/>
    </location>
</feature>
<feature type="region of interest" description="Disordered" evidence="3">
    <location>
        <begin position="163"/>
        <end position="240"/>
    </location>
</feature>
<feature type="coiled-coil region" evidence="2">
    <location>
        <begin position="211"/>
        <end position="239"/>
    </location>
</feature>
<feature type="compositionally biased region" description="Low complexity" evidence="3">
    <location>
        <begin position="7"/>
        <end position="26"/>
    </location>
</feature>
<feature type="compositionally biased region" description="Low complexity" evidence="3">
    <location>
        <begin position="163"/>
        <end position="179"/>
    </location>
</feature>
<feature type="compositionally biased region" description="Polar residues" evidence="3">
    <location>
        <begin position="180"/>
        <end position="190"/>
    </location>
</feature>
<feature type="compositionally biased region" description="Low complexity" evidence="3">
    <location>
        <begin position="196"/>
        <end position="205"/>
    </location>
</feature>
<feature type="compositionally biased region" description="Basic and acidic residues" evidence="3">
    <location>
        <begin position="208"/>
        <end position="240"/>
    </location>
</feature>
<name>BORC8_DICDI</name>
<comment type="function">
    <text evidence="1">May participate in the coupling of lysosomes to microtubule plus-end-directed kinesin motor.</text>
</comment>
<comment type="subcellular location">
    <subcellularLocation>
        <location evidence="1">Lysosome membrane</location>
    </subcellularLocation>
</comment>
<comment type="similarity">
    <text evidence="4">Belongs to the BORCS8 family.</text>
</comment>
<accession>Q54JC6</accession>
<sequence>MSSILKSSTGSNHSSTSNHSSINNISQLSGSHGVEQQQLRPVLTLDASTAKLMYQTSQEMSSYIQQVANEPTIGLFHVQDHIRRNIPKNVELKKNIKALGEKIEEKSFDIDYSTKTIKTFSEIQTFSNISSLLQQSIERANKLVNNKSLLFVNSQMAAPSSSKTFSSFQQQHKIYQQQQTNLTPSKPTLSNDKTNDNNNNNNNLNFVEKIEKEEKIEKEDEGKEKDEKEKDDKDLNEKIN</sequence>
<organism>
    <name type="scientific">Dictyostelium discoideum</name>
    <name type="common">Social amoeba</name>
    <dbReference type="NCBI Taxonomy" id="44689"/>
    <lineage>
        <taxon>Eukaryota</taxon>
        <taxon>Amoebozoa</taxon>
        <taxon>Evosea</taxon>
        <taxon>Eumycetozoa</taxon>
        <taxon>Dictyostelia</taxon>
        <taxon>Dictyosteliales</taxon>
        <taxon>Dictyosteliaceae</taxon>
        <taxon>Dictyostelium</taxon>
    </lineage>
</organism>
<keyword id="KW-0175">Coiled coil</keyword>
<keyword id="KW-0458">Lysosome</keyword>
<keyword id="KW-0472">Membrane</keyword>
<keyword id="KW-1185">Reference proteome</keyword>